<sequence>MTELFFEYIFPLIIIALKVVAITIPLILCVAYLTYAERRVIGLMQLRRGPNVVGPFGLLQPIADAVKLLFKEPIIPTNSDKILFILAPMITFILSLIGWAVIPFAKGVVLADINVGVLYILAISSLSVYGIIIAGWASNSKYAFLGAIRSSAQMISYEVSMGLVIITVLLTTGTLNLSGIIEAQRTMPWWIDLMLLPMGVVFFISVLAETNRLPFDLPEAESELVAGYNVEYSSMGFALFFLGEYANMILVSAMTTTFFLGGYLPPFNISWLDFIPGFFWFVFKVGFLLFCFLWIRATLPRYRYDQLMRLGWKVFLPLTLFWVVLVSSVLVYTDNLSNV</sequence>
<dbReference type="EC" id="7.1.1.-" evidence="1"/>
<dbReference type="EMBL" id="CP000053">
    <property type="protein sequence ID" value="AAY62112.1"/>
    <property type="molecule type" value="Genomic_DNA"/>
</dbReference>
<dbReference type="SMR" id="Q4UK23"/>
<dbReference type="STRING" id="315456.RF_1261"/>
<dbReference type="KEGG" id="rfe:RF_1261"/>
<dbReference type="eggNOG" id="COG1005">
    <property type="taxonomic scope" value="Bacteria"/>
</dbReference>
<dbReference type="HOGENOM" id="CLU_015134_0_1_5"/>
<dbReference type="OrthoDB" id="9803734at2"/>
<dbReference type="Proteomes" id="UP000008548">
    <property type="component" value="Chromosome"/>
</dbReference>
<dbReference type="GO" id="GO:0005886">
    <property type="term" value="C:plasma membrane"/>
    <property type="evidence" value="ECO:0007669"/>
    <property type="project" value="UniProtKB-SubCell"/>
</dbReference>
<dbReference type="GO" id="GO:0003954">
    <property type="term" value="F:NADH dehydrogenase activity"/>
    <property type="evidence" value="ECO:0007669"/>
    <property type="project" value="TreeGrafter"/>
</dbReference>
<dbReference type="GO" id="GO:0016655">
    <property type="term" value="F:oxidoreductase activity, acting on NAD(P)H, quinone or similar compound as acceptor"/>
    <property type="evidence" value="ECO:0007669"/>
    <property type="project" value="UniProtKB-UniRule"/>
</dbReference>
<dbReference type="GO" id="GO:0048038">
    <property type="term" value="F:quinone binding"/>
    <property type="evidence" value="ECO:0007669"/>
    <property type="project" value="UniProtKB-KW"/>
</dbReference>
<dbReference type="GO" id="GO:0009060">
    <property type="term" value="P:aerobic respiration"/>
    <property type="evidence" value="ECO:0007669"/>
    <property type="project" value="TreeGrafter"/>
</dbReference>
<dbReference type="HAMAP" id="MF_01350">
    <property type="entry name" value="NDH1_NuoH"/>
    <property type="match status" value="1"/>
</dbReference>
<dbReference type="InterPro" id="IPR001694">
    <property type="entry name" value="NADH_UbQ_OxRdtase_su1/FPO"/>
</dbReference>
<dbReference type="InterPro" id="IPR018086">
    <property type="entry name" value="NADH_UbQ_OxRdtase_su1_CS"/>
</dbReference>
<dbReference type="NCBIfam" id="NF004741">
    <property type="entry name" value="PRK06076.1-2"/>
    <property type="match status" value="1"/>
</dbReference>
<dbReference type="NCBIfam" id="NF004745">
    <property type="entry name" value="PRK06076.1-6"/>
    <property type="match status" value="1"/>
</dbReference>
<dbReference type="PANTHER" id="PTHR11432">
    <property type="entry name" value="NADH DEHYDROGENASE SUBUNIT 1"/>
    <property type="match status" value="1"/>
</dbReference>
<dbReference type="PANTHER" id="PTHR11432:SF3">
    <property type="entry name" value="NADH-UBIQUINONE OXIDOREDUCTASE CHAIN 1"/>
    <property type="match status" value="1"/>
</dbReference>
<dbReference type="Pfam" id="PF00146">
    <property type="entry name" value="NADHdh"/>
    <property type="match status" value="1"/>
</dbReference>
<dbReference type="PROSITE" id="PS00667">
    <property type="entry name" value="COMPLEX1_ND1_1"/>
    <property type="match status" value="1"/>
</dbReference>
<dbReference type="PROSITE" id="PS00668">
    <property type="entry name" value="COMPLEX1_ND1_2"/>
    <property type="match status" value="1"/>
</dbReference>
<proteinExistence type="inferred from homology"/>
<evidence type="ECO:0000255" key="1">
    <source>
        <dbReference type="HAMAP-Rule" id="MF_01350"/>
    </source>
</evidence>
<feature type="chain" id="PRO_0000240107" description="NADH-quinone oxidoreductase subunit H">
    <location>
        <begin position="1"/>
        <end position="339"/>
    </location>
</feature>
<feature type="transmembrane region" description="Helical" evidence="1">
    <location>
        <begin position="9"/>
        <end position="29"/>
    </location>
</feature>
<feature type="transmembrane region" description="Helical" evidence="1">
    <location>
        <begin position="50"/>
        <end position="70"/>
    </location>
</feature>
<feature type="transmembrane region" description="Helical" evidence="1">
    <location>
        <begin position="82"/>
        <end position="102"/>
    </location>
</feature>
<feature type="transmembrane region" description="Helical" evidence="1">
    <location>
        <begin position="115"/>
        <end position="135"/>
    </location>
</feature>
<feature type="transmembrane region" description="Helical" evidence="1">
    <location>
        <begin position="161"/>
        <end position="181"/>
    </location>
</feature>
<feature type="transmembrane region" description="Helical" evidence="1">
    <location>
        <begin position="187"/>
        <end position="207"/>
    </location>
</feature>
<feature type="transmembrane region" description="Helical" evidence="1">
    <location>
        <begin position="235"/>
        <end position="255"/>
    </location>
</feature>
<feature type="transmembrane region" description="Helical" evidence="1">
    <location>
        <begin position="275"/>
        <end position="295"/>
    </location>
</feature>
<feature type="transmembrane region" description="Helical" evidence="1">
    <location>
        <begin position="311"/>
        <end position="331"/>
    </location>
</feature>
<reference key="1">
    <citation type="journal article" date="2005" name="PLoS Biol.">
        <title>The genome sequence of Rickettsia felis identifies the first putative conjugative plasmid in an obligate intracellular parasite.</title>
        <authorList>
            <person name="Ogata H."/>
            <person name="Renesto P."/>
            <person name="Audic S."/>
            <person name="Robert C."/>
            <person name="Blanc G."/>
            <person name="Fournier P.-E."/>
            <person name="Parinello H."/>
            <person name="Claverie J.-M."/>
            <person name="Raoult D."/>
        </authorList>
    </citation>
    <scope>NUCLEOTIDE SEQUENCE [LARGE SCALE GENOMIC DNA]</scope>
    <source>
        <strain>ATCC VR-1525 / URRWXCal2</strain>
    </source>
</reference>
<organism>
    <name type="scientific">Rickettsia felis (strain ATCC VR-1525 / URRWXCal2)</name>
    <name type="common">Rickettsia azadi</name>
    <dbReference type="NCBI Taxonomy" id="315456"/>
    <lineage>
        <taxon>Bacteria</taxon>
        <taxon>Pseudomonadati</taxon>
        <taxon>Pseudomonadota</taxon>
        <taxon>Alphaproteobacteria</taxon>
        <taxon>Rickettsiales</taxon>
        <taxon>Rickettsiaceae</taxon>
        <taxon>Rickettsieae</taxon>
        <taxon>Rickettsia</taxon>
        <taxon>spotted fever group</taxon>
    </lineage>
</organism>
<accession>Q4UK23</accession>
<name>NUOH_RICFE</name>
<gene>
    <name evidence="1" type="primary">nuoH</name>
    <name type="ordered locus">RF_1261</name>
</gene>
<keyword id="KW-0997">Cell inner membrane</keyword>
<keyword id="KW-1003">Cell membrane</keyword>
<keyword id="KW-0472">Membrane</keyword>
<keyword id="KW-0520">NAD</keyword>
<keyword id="KW-0874">Quinone</keyword>
<keyword id="KW-1278">Translocase</keyword>
<keyword id="KW-0812">Transmembrane</keyword>
<keyword id="KW-1133">Transmembrane helix</keyword>
<keyword id="KW-0830">Ubiquinone</keyword>
<protein>
    <recommendedName>
        <fullName evidence="1">NADH-quinone oxidoreductase subunit H</fullName>
        <ecNumber evidence="1">7.1.1.-</ecNumber>
    </recommendedName>
    <alternativeName>
        <fullName evidence="1">NADH dehydrogenase I subunit H</fullName>
    </alternativeName>
    <alternativeName>
        <fullName evidence="1">NDH-1 subunit H</fullName>
    </alternativeName>
</protein>
<comment type="function">
    <text evidence="1">NDH-1 shuttles electrons from NADH, via FMN and iron-sulfur (Fe-S) centers, to quinones in the respiratory chain. The immediate electron acceptor for the enzyme in this species is believed to be ubiquinone. Couples the redox reaction to proton translocation (for every two electrons transferred, four hydrogen ions are translocated across the cytoplasmic membrane), and thus conserves the redox energy in a proton gradient. This subunit may bind ubiquinone.</text>
</comment>
<comment type="catalytic activity">
    <reaction evidence="1">
        <text>a quinone + NADH + 5 H(+)(in) = a quinol + NAD(+) + 4 H(+)(out)</text>
        <dbReference type="Rhea" id="RHEA:57888"/>
        <dbReference type="ChEBI" id="CHEBI:15378"/>
        <dbReference type="ChEBI" id="CHEBI:24646"/>
        <dbReference type="ChEBI" id="CHEBI:57540"/>
        <dbReference type="ChEBI" id="CHEBI:57945"/>
        <dbReference type="ChEBI" id="CHEBI:132124"/>
    </reaction>
</comment>
<comment type="subunit">
    <text evidence="1">NDH-1 is composed of 14 different subunits. Subunits NuoA, H, J, K, L, M, N constitute the membrane sector of the complex.</text>
</comment>
<comment type="subcellular location">
    <subcellularLocation>
        <location evidence="1">Cell inner membrane</location>
        <topology evidence="1">Multi-pass membrane protein</topology>
    </subcellularLocation>
</comment>
<comment type="similarity">
    <text evidence="1">Belongs to the complex I subunit 1 family.</text>
</comment>